<sequence length="205" mass="23253">MDTVIELSKLLHDEEFKDNASCTSTPTLKTARIIESAVTGITLTASVPMIIIVITTMILYHRVAKHNATSFYVITLFASDFVLMWCVFFMTVNREQLFSFNRFFCQLVYFIYHAVCSYSISMLAIIATIRYKTLHRRKQTESKTYSTGRNIGILLLASSMCAIPTALFVQINGAKKTTGKCVVYLSSPKAYELFLAVKIVFSFIW</sequence>
<gene>
    <name type="primary">U12</name>
</gene>
<protein>
    <recommendedName>
        <fullName>G-protein coupled receptor</fullName>
    </recommendedName>
</protein>
<dbReference type="EMBL" id="AF157706">
    <property type="protein sequence ID" value="AAD49690.1"/>
    <property type="molecule type" value="Genomic_DNA"/>
</dbReference>
<dbReference type="RefSeq" id="NP_050193.1">
    <property type="nucleotide sequence ID" value="NC_000898.1"/>
</dbReference>
<dbReference type="SMR" id="Q9QJ51"/>
<dbReference type="DNASU" id="1497022"/>
<dbReference type="GeneID" id="1497022"/>
<dbReference type="KEGG" id="vg:1497022"/>
<dbReference type="Proteomes" id="UP000006930">
    <property type="component" value="Segment"/>
</dbReference>
<dbReference type="GO" id="GO:0033644">
    <property type="term" value="C:host cell membrane"/>
    <property type="evidence" value="ECO:0007669"/>
    <property type="project" value="UniProtKB-SubCell"/>
</dbReference>
<dbReference type="GO" id="GO:0016020">
    <property type="term" value="C:membrane"/>
    <property type="evidence" value="ECO:0007669"/>
    <property type="project" value="UniProtKB-KW"/>
</dbReference>
<dbReference type="GO" id="GO:0004930">
    <property type="term" value="F:G protein-coupled receptor activity"/>
    <property type="evidence" value="ECO:0007669"/>
    <property type="project" value="UniProtKB-KW"/>
</dbReference>
<dbReference type="CDD" id="cd00637">
    <property type="entry name" value="7tm_classA_rhodopsin-like"/>
    <property type="match status" value="1"/>
</dbReference>
<dbReference type="Gene3D" id="1.20.1070.10">
    <property type="entry name" value="Rhodopsin 7-helix transmembrane proteins"/>
    <property type="match status" value="1"/>
</dbReference>
<dbReference type="InterPro" id="IPR000276">
    <property type="entry name" value="GPCR_Rhodpsn"/>
</dbReference>
<dbReference type="InterPro" id="IPR017452">
    <property type="entry name" value="GPCR_Rhodpsn_7TM"/>
</dbReference>
<dbReference type="PANTHER" id="PTHR24238">
    <property type="entry name" value="G-PROTEIN COUPLED RECEPTOR"/>
    <property type="match status" value="1"/>
</dbReference>
<dbReference type="Pfam" id="PF00001">
    <property type="entry name" value="7tm_1"/>
    <property type="match status" value="1"/>
</dbReference>
<dbReference type="SUPFAM" id="SSF81321">
    <property type="entry name" value="Family A G protein-coupled receptor-like"/>
    <property type="match status" value="1"/>
</dbReference>
<dbReference type="PROSITE" id="PS50262">
    <property type="entry name" value="G_PROTEIN_RECEP_F1_2"/>
    <property type="match status" value="1"/>
</dbReference>
<organism>
    <name type="scientific">Human herpesvirus 6B (strain Z29)</name>
    <name type="common">HHV-6 variant B</name>
    <name type="synonym">Human B lymphotropic virus</name>
    <dbReference type="NCBI Taxonomy" id="36351"/>
    <lineage>
        <taxon>Viruses</taxon>
        <taxon>Duplodnaviria</taxon>
        <taxon>Heunggongvirae</taxon>
        <taxon>Peploviricota</taxon>
        <taxon>Herviviricetes</taxon>
        <taxon>Herpesvirales</taxon>
        <taxon>Orthoherpesviridae</taxon>
        <taxon>Betaherpesvirinae</taxon>
        <taxon>Roseolovirus</taxon>
        <taxon>Roseolovirus humanbeta6b</taxon>
        <taxon>Human herpesvirus 6B</taxon>
    </lineage>
</organism>
<reference key="1">
    <citation type="journal article" date="1993" name="Virology">
        <title>A strongly immunoreactive virion protein of human herpesvirus 6 variant B strain Z29: identification and characterization of the gene and mapping of a variant-specific monoclonal antibody reactive epitope.</title>
        <authorList>
            <person name="Pellett P.E."/>
            <person name="Sanchez-Martinez D."/>
            <person name="Dominguez G."/>
            <person name="Black J.B."/>
            <person name="Anton E."/>
            <person name="Greenamoyer C."/>
            <person name="Dambaugh T.R."/>
        </authorList>
    </citation>
    <scope>NUCLEOTIDE SEQUENCE [LARGE SCALE GENOMIC DNA]</scope>
</reference>
<reference key="2">
    <citation type="journal article" date="1999" name="J. Virol.">
        <title>Human herpesvirus 6B genome sequence: coding content and comparison with human herpesvirus 6A.</title>
        <authorList>
            <person name="Dominguez G."/>
            <person name="Dambaugh T.R."/>
            <person name="Stamey F.R."/>
            <person name="Dewhurst S."/>
            <person name="Inoue N."/>
            <person name="Pellett P.E."/>
        </authorList>
    </citation>
    <scope>NUCLEOTIDE SEQUENCE [LARGE SCALE GENOMIC DNA]</scope>
</reference>
<organismHost>
    <name type="scientific">Homo sapiens</name>
    <name type="common">Human</name>
    <dbReference type="NCBI Taxonomy" id="9606"/>
</organismHost>
<keyword id="KW-1015">Disulfide bond</keyword>
<keyword id="KW-0297">G-protein coupled receptor</keyword>
<keyword id="KW-1043">Host membrane</keyword>
<keyword id="KW-0472">Membrane</keyword>
<keyword id="KW-0675">Receptor</keyword>
<keyword id="KW-1185">Reference proteome</keyword>
<keyword id="KW-0807">Transducer</keyword>
<keyword id="KW-0812">Transmembrane</keyword>
<keyword id="KW-1133">Transmembrane helix</keyword>
<name>VGCR_HHV6Z</name>
<accession>Q9QJ51</accession>
<proteinExistence type="inferred from homology"/>
<evidence type="ECO:0000255" key="1"/>
<evidence type="ECO:0000255" key="2">
    <source>
        <dbReference type="PROSITE-ProRule" id="PRU00521"/>
    </source>
</evidence>
<evidence type="ECO:0000305" key="3"/>
<feature type="chain" id="PRO_0000408446" description="G-protein coupled receptor">
    <location>
        <begin position="1"/>
        <end position="205"/>
    </location>
</feature>
<feature type="transmembrane region" description="Helical" evidence="1">
    <location>
        <begin position="40"/>
        <end position="60"/>
    </location>
</feature>
<feature type="transmembrane region" description="Helical" evidence="1">
    <location>
        <begin position="71"/>
        <end position="91"/>
    </location>
</feature>
<feature type="transmembrane region" description="Helical" evidence="1">
    <location>
        <begin position="107"/>
        <end position="127"/>
    </location>
</feature>
<feature type="transmembrane region" description="Helical" evidence="1">
    <location>
        <begin position="151"/>
        <end position="171"/>
    </location>
</feature>
<feature type="transmembrane region" description="Helical" evidence="1">
    <location>
        <begin position="185"/>
        <end position="205"/>
    </location>
</feature>
<feature type="disulfide bond" evidence="2">
    <location>
        <begin position="105"/>
        <end position="181"/>
    </location>
</feature>
<comment type="subcellular location">
    <subcellularLocation>
        <location evidence="3">Host membrane</location>
        <topology evidence="3">Multi-pass membrane protein</topology>
    </subcellularLocation>
</comment>
<comment type="similarity">
    <text evidence="2">Belongs to the G-protein coupled receptor 1 family.</text>
</comment>